<feature type="chain" id="PRO_1000049835" description="3-hydroxyacyl-[acyl-carrier-protein] dehydratase FabZ">
    <location>
        <begin position="1"/>
        <end position="155"/>
    </location>
</feature>
<feature type="active site" evidence="1">
    <location>
        <position position="54"/>
    </location>
</feature>
<sequence length="155" mass="17412">MSTEKINFDIHKILTLLPHRYPILLVDRVLELEPHKAIKALKNVTVNEPFFTGHFPKRPVMPGVLIIEALAQAAALLTFAEAQPKDPENTLYYFVGIDNARFKRVVEPGDQLILNVTFERYIRGIWKFKAVAEVDGKVAAEAELMCTVKTADAAP</sequence>
<dbReference type="EC" id="4.2.1.59" evidence="1"/>
<dbReference type="EMBL" id="CP000548">
    <property type="protein sequence ID" value="ABO06912.1"/>
    <property type="molecule type" value="Genomic_DNA"/>
</dbReference>
<dbReference type="RefSeq" id="WP_004192266.1">
    <property type="nucleotide sequence ID" value="NZ_CP007802.1"/>
</dbReference>
<dbReference type="SMR" id="A3MKT1"/>
<dbReference type="GeneID" id="93060689"/>
<dbReference type="KEGG" id="bmaz:BM44_1809"/>
<dbReference type="KEGG" id="bmn:BMA10247_1316"/>
<dbReference type="PATRIC" id="fig|320389.8.peg.2024"/>
<dbReference type="GO" id="GO:0005737">
    <property type="term" value="C:cytoplasm"/>
    <property type="evidence" value="ECO:0007669"/>
    <property type="project" value="UniProtKB-SubCell"/>
</dbReference>
<dbReference type="GO" id="GO:0016020">
    <property type="term" value="C:membrane"/>
    <property type="evidence" value="ECO:0007669"/>
    <property type="project" value="GOC"/>
</dbReference>
<dbReference type="GO" id="GO:0019171">
    <property type="term" value="F:(3R)-hydroxyacyl-[acyl-carrier-protein] dehydratase activity"/>
    <property type="evidence" value="ECO:0007669"/>
    <property type="project" value="UniProtKB-EC"/>
</dbReference>
<dbReference type="GO" id="GO:0006633">
    <property type="term" value="P:fatty acid biosynthetic process"/>
    <property type="evidence" value="ECO:0007669"/>
    <property type="project" value="UniProtKB-UniRule"/>
</dbReference>
<dbReference type="GO" id="GO:0009245">
    <property type="term" value="P:lipid A biosynthetic process"/>
    <property type="evidence" value="ECO:0007669"/>
    <property type="project" value="UniProtKB-UniRule"/>
</dbReference>
<dbReference type="CDD" id="cd01288">
    <property type="entry name" value="FabZ"/>
    <property type="match status" value="1"/>
</dbReference>
<dbReference type="FunFam" id="3.10.129.10:FF:000001">
    <property type="entry name" value="3-hydroxyacyl-[acyl-carrier-protein] dehydratase FabZ"/>
    <property type="match status" value="1"/>
</dbReference>
<dbReference type="Gene3D" id="3.10.129.10">
    <property type="entry name" value="Hotdog Thioesterase"/>
    <property type="match status" value="1"/>
</dbReference>
<dbReference type="HAMAP" id="MF_00406">
    <property type="entry name" value="FabZ"/>
    <property type="match status" value="1"/>
</dbReference>
<dbReference type="InterPro" id="IPR013114">
    <property type="entry name" value="FabA_FabZ"/>
</dbReference>
<dbReference type="InterPro" id="IPR010084">
    <property type="entry name" value="FabZ"/>
</dbReference>
<dbReference type="InterPro" id="IPR029069">
    <property type="entry name" value="HotDog_dom_sf"/>
</dbReference>
<dbReference type="NCBIfam" id="TIGR01750">
    <property type="entry name" value="fabZ"/>
    <property type="match status" value="1"/>
</dbReference>
<dbReference type="NCBIfam" id="NF000582">
    <property type="entry name" value="PRK00006.1"/>
    <property type="match status" value="1"/>
</dbReference>
<dbReference type="PANTHER" id="PTHR30272">
    <property type="entry name" value="3-HYDROXYACYL-[ACYL-CARRIER-PROTEIN] DEHYDRATASE"/>
    <property type="match status" value="1"/>
</dbReference>
<dbReference type="PANTHER" id="PTHR30272:SF1">
    <property type="entry name" value="3-HYDROXYACYL-[ACYL-CARRIER-PROTEIN] DEHYDRATASE"/>
    <property type="match status" value="1"/>
</dbReference>
<dbReference type="Pfam" id="PF07977">
    <property type="entry name" value="FabA"/>
    <property type="match status" value="1"/>
</dbReference>
<dbReference type="SUPFAM" id="SSF54637">
    <property type="entry name" value="Thioesterase/thiol ester dehydrase-isomerase"/>
    <property type="match status" value="1"/>
</dbReference>
<keyword id="KW-0963">Cytoplasm</keyword>
<keyword id="KW-0441">Lipid A biosynthesis</keyword>
<keyword id="KW-0444">Lipid biosynthesis</keyword>
<keyword id="KW-0443">Lipid metabolism</keyword>
<keyword id="KW-0456">Lyase</keyword>
<accession>A3MKT1</accession>
<proteinExistence type="inferred from homology"/>
<protein>
    <recommendedName>
        <fullName evidence="1">3-hydroxyacyl-[acyl-carrier-protein] dehydratase FabZ</fullName>
        <ecNumber evidence="1">4.2.1.59</ecNumber>
    </recommendedName>
    <alternativeName>
        <fullName evidence="1">(3R)-hydroxymyristoyl-[acyl-carrier-protein] dehydratase</fullName>
        <shortName evidence="1">(3R)-hydroxymyristoyl-ACP dehydrase</shortName>
    </alternativeName>
    <alternativeName>
        <fullName evidence="1">Beta-hydroxyacyl-ACP dehydratase</fullName>
    </alternativeName>
</protein>
<comment type="function">
    <text evidence="1">Involved in unsaturated fatty acids biosynthesis. Catalyzes the dehydration of short chain beta-hydroxyacyl-ACPs and long chain saturated and unsaturated beta-hydroxyacyl-ACPs.</text>
</comment>
<comment type="catalytic activity">
    <reaction evidence="1">
        <text>a (3R)-hydroxyacyl-[ACP] = a (2E)-enoyl-[ACP] + H2O</text>
        <dbReference type="Rhea" id="RHEA:13097"/>
        <dbReference type="Rhea" id="RHEA-COMP:9925"/>
        <dbReference type="Rhea" id="RHEA-COMP:9945"/>
        <dbReference type="ChEBI" id="CHEBI:15377"/>
        <dbReference type="ChEBI" id="CHEBI:78784"/>
        <dbReference type="ChEBI" id="CHEBI:78827"/>
        <dbReference type="EC" id="4.2.1.59"/>
    </reaction>
</comment>
<comment type="subcellular location">
    <subcellularLocation>
        <location evidence="1">Cytoplasm</location>
    </subcellularLocation>
</comment>
<comment type="similarity">
    <text evidence="1">Belongs to the thioester dehydratase family. FabZ subfamily.</text>
</comment>
<evidence type="ECO:0000255" key="1">
    <source>
        <dbReference type="HAMAP-Rule" id="MF_00406"/>
    </source>
</evidence>
<organism>
    <name type="scientific">Burkholderia mallei (strain NCTC 10247)</name>
    <dbReference type="NCBI Taxonomy" id="320389"/>
    <lineage>
        <taxon>Bacteria</taxon>
        <taxon>Pseudomonadati</taxon>
        <taxon>Pseudomonadota</taxon>
        <taxon>Betaproteobacteria</taxon>
        <taxon>Burkholderiales</taxon>
        <taxon>Burkholderiaceae</taxon>
        <taxon>Burkholderia</taxon>
        <taxon>pseudomallei group</taxon>
    </lineage>
</organism>
<reference key="1">
    <citation type="journal article" date="2010" name="Genome Biol. Evol.">
        <title>Continuing evolution of Burkholderia mallei through genome reduction and large-scale rearrangements.</title>
        <authorList>
            <person name="Losada L."/>
            <person name="Ronning C.M."/>
            <person name="DeShazer D."/>
            <person name="Woods D."/>
            <person name="Fedorova N."/>
            <person name="Kim H.S."/>
            <person name="Shabalina S.A."/>
            <person name="Pearson T.R."/>
            <person name="Brinkac L."/>
            <person name="Tan P."/>
            <person name="Nandi T."/>
            <person name="Crabtree J."/>
            <person name="Badger J."/>
            <person name="Beckstrom-Sternberg S."/>
            <person name="Saqib M."/>
            <person name="Schutzer S.E."/>
            <person name="Keim P."/>
            <person name="Nierman W.C."/>
        </authorList>
    </citation>
    <scope>NUCLEOTIDE SEQUENCE [LARGE SCALE GENOMIC DNA]</scope>
    <source>
        <strain>NCTC 10247</strain>
    </source>
</reference>
<name>FABZ_BURM7</name>
<gene>
    <name evidence="1" type="primary">fabZ</name>
    <name type="ordered locus">BMA10247_1316</name>
</gene>